<dbReference type="EMBL" id="CH408046">
    <property type="protein sequence ID" value="EDV11283.1"/>
    <property type="molecule type" value="Genomic_DNA"/>
</dbReference>
<dbReference type="HOGENOM" id="CLU_045414_1_0_1"/>
<dbReference type="OrthoDB" id="4569at4893"/>
<dbReference type="Proteomes" id="UP000008335">
    <property type="component" value="Unassembled WGS sequence"/>
</dbReference>
<dbReference type="GO" id="GO:0005634">
    <property type="term" value="C:nucleus"/>
    <property type="evidence" value="ECO:0007669"/>
    <property type="project" value="UniProtKB-SubCell"/>
</dbReference>
<dbReference type="GO" id="GO:0006325">
    <property type="term" value="P:chromatin organization"/>
    <property type="evidence" value="ECO:0007669"/>
    <property type="project" value="UniProtKB-KW"/>
</dbReference>
<dbReference type="Gene3D" id="2.130.10.10">
    <property type="entry name" value="YVTN repeat-like/Quinoprotein amine dehydrogenase"/>
    <property type="match status" value="1"/>
</dbReference>
<dbReference type="InterPro" id="IPR015943">
    <property type="entry name" value="WD40/YVTN_repeat-like_dom_sf"/>
</dbReference>
<dbReference type="InterPro" id="IPR036322">
    <property type="entry name" value="WD40_repeat_dom_sf"/>
</dbReference>
<dbReference type="PANTHER" id="PTHR19854:SF1">
    <property type="entry name" value="GUANINE NUCLEOTIDE-BINDING PROTEIN SUBUNIT BETA-LIKE PROTEIN 1"/>
    <property type="match status" value="1"/>
</dbReference>
<dbReference type="PANTHER" id="PTHR19854">
    <property type="entry name" value="TRANSDUCIN BETA-LIKE 3"/>
    <property type="match status" value="1"/>
</dbReference>
<dbReference type="SUPFAM" id="SSF50978">
    <property type="entry name" value="WD40 repeat-like"/>
    <property type="match status" value="1"/>
</dbReference>
<evidence type="ECO:0000250" key="1"/>
<evidence type="ECO:0000256" key="2">
    <source>
        <dbReference type="SAM" id="MobiDB-lite"/>
    </source>
</evidence>
<evidence type="ECO:0000305" key="3"/>
<organism>
    <name type="scientific">Saccharomyces cerevisiae (strain RM11-1a)</name>
    <name type="common">Baker's yeast</name>
    <dbReference type="NCBI Taxonomy" id="285006"/>
    <lineage>
        <taxon>Eukaryota</taxon>
        <taxon>Fungi</taxon>
        <taxon>Dikarya</taxon>
        <taxon>Ascomycota</taxon>
        <taxon>Saccharomycotina</taxon>
        <taxon>Saccharomycetes</taxon>
        <taxon>Saccharomycetales</taxon>
        <taxon>Saccharomycetaceae</taxon>
        <taxon>Saccharomyces</taxon>
    </lineage>
</organism>
<comment type="function">
    <text evidence="1">Component of the ASTRA complex involved in chromatin remodeling.</text>
</comment>
<comment type="subunit">
    <text evidence="1">Component of the ASTRA chromatin remodeling machinery complex composed of at least RVB1, RVB2, TRA1, TEL2, TTI1 and TTI2.</text>
</comment>
<comment type="subcellular location">
    <subcellularLocation>
        <location evidence="1">Nucleus</location>
    </subcellularLocation>
</comment>
<comment type="similarity">
    <text evidence="3">Belongs to the WD repeat ASA1 family.</text>
</comment>
<accession>B3LK55</accession>
<name>ASA1_YEAS1</name>
<sequence>MRGFSNEIILKRTLTLSDFTLRYHKRGITALQVIKAPSVSNVPVLLSGDNYGYFVMWDLVTKRPITHIEIEGNSHIIAFWWVETTNVLYILSKDSMLRIFELDSSTQLSIDLVRKLSQANKTDHLQWTKIYEMPINTLNFANFIIEAEVKPTKDNKSYRLVCCHTDDSETIDIYQIIEDSTFKLKRPFNNINFPRFLKQQNFLGISKDSKFGIIMRFAKLNDVIFLGYENGFVVGFKITFDEGLQRDIAELVHVSNDHYPNPILDMCVSGDELYSCSTDDFITKYKIPVNLQLETKYLRDDALLIKCPSSLRVSEPSKVHLPLKNIGHIDKVKDDYLVVSSWSGMTIVYNMRTSEVEQTFVKSKNNLVVSDSSMGDLTNGSGSNTESSSKSHNYKVGAMTCLESFDVQSDGLRLGQLRRIKALAKCNWCLIGYEDGTIKLNKI</sequence>
<protein>
    <recommendedName>
        <fullName>ASTRA-associated protein 1</fullName>
    </recommendedName>
</protein>
<keyword id="KW-0156">Chromatin regulator</keyword>
<keyword id="KW-0539">Nucleus</keyword>
<keyword id="KW-0677">Repeat</keyword>
<keyword id="KW-0853">WD repeat</keyword>
<gene>
    <name type="primary">ASA1</name>
    <name type="ORF">SCRG_02567</name>
</gene>
<reference key="1">
    <citation type="submission" date="2005-03" db="EMBL/GenBank/DDBJ databases">
        <title>Annotation of the Saccharomyces cerevisiae RM11-1a genome.</title>
        <authorList>
            <consortium name="The Broad Institute Genome Sequencing Platform"/>
            <person name="Birren B.W."/>
            <person name="Lander E.S."/>
            <person name="Galagan J.E."/>
            <person name="Nusbaum C."/>
            <person name="Devon K."/>
            <person name="Cuomo C."/>
            <person name="Jaffe D.B."/>
            <person name="Butler J."/>
            <person name="Alvarez P."/>
            <person name="Gnerre S."/>
            <person name="Grabherr M."/>
            <person name="Kleber M."/>
            <person name="Mauceli E.W."/>
            <person name="Brockman W."/>
            <person name="MacCallum I.A."/>
            <person name="Rounsley S."/>
            <person name="Young S.K."/>
            <person name="LaButti K."/>
            <person name="Pushparaj V."/>
            <person name="DeCaprio D."/>
            <person name="Crawford M."/>
            <person name="Koehrsen M."/>
            <person name="Engels R."/>
            <person name="Montgomery P."/>
            <person name="Pearson M."/>
            <person name="Howarth C."/>
            <person name="Larson L."/>
            <person name="Luoma S."/>
            <person name="White J."/>
            <person name="O'Leary S."/>
            <person name="Kodira C.D."/>
            <person name="Zeng Q."/>
            <person name="Yandava C."/>
            <person name="Alvarado L."/>
            <person name="Pratt S."/>
            <person name="Kruglyak L."/>
        </authorList>
    </citation>
    <scope>NUCLEOTIDE SEQUENCE [LARGE SCALE GENOMIC DNA]</scope>
    <source>
        <strain>RM11-1a</strain>
    </source>
</reference>
<feature type="chain" id="PRO_0000402225" description="ASTRA-associated protein 1">
    <location>
        <begin position="1"/>
        <end position="443"/>
    </location>
</feature>
<feature type="repeat" description="WD 1">
    <location>
        <begin position="23"/>
        <end position="67"/>
    </location>
</feature>
<feature type="repeat" description="WD 2">
    <location>
        <begin position="71"/>
        <end position="110"/>
    </location>
</feature>
<feature type="repeat" description="WD 3">
    <location>
        <begin position="258"/>
        <end position="295"/>
    </location>
</feature>
<feature type="repeat" description="WD 4">
    <location>
        <begin position="318"/>
        <end position="359"/>
    </location>
</feature>
<feature type="region of interest" description="Disordered" evidence="2">
    <location>
        <begin position="372"/>
        <end position="391"/>
    </location>
</feature>
<feature type="compositionally biased region" description="Low complexity" evidence="2">
    <location>
        <begin position="378"/>
        <end position="391"/>
    </location>
</feature>
<proteinExistence type="inferred from homology"/>